<gene>
    <name evidence="1" type="primary">flgH</name>
    <name type="ordered locus">lpg1222</name>
</gene>
<evidence type="ECO:0000255" key="1">
    <source>
        <dbReference type="HAMAP-Rule" id="MF_00415"/>
    </source>
</evidence>
<protein>
    <recommendedName>
        <fullName evidence="1">Flagellar L-ring protein</fullName>
    </recommendedName>
    <alternativeName>
        <fullName evidence="1">Basal body L-ring protein</fullName>
    </alternativeName>
</protein>
<keyword id="KW-0975">Bacterial flagellum</keyword>
<keyword id="KW-0998">Cell outer membrane</keyword>
<keyword id="KW-0449">Lipoprotein</keyword>
<keyword id="KW-0472">Membrane</keyword>
<keyword id="KW-0564">Palmitate</keyword>
<keyword id="KW-1185">Reference proteome</keyword>
<keyword id="KW-0732">Signal</keyword>
<feature type="signal peptide" evidence="1">
    <location>
        <begin position="1"/>
        <end position="18"/>
    </location>
</feature>
<feature type="chain" id="PRO_0000009454" description="Flagellar L-ring protein">
    <location>
        <begin position="19"/>
        <end position="230"/>
    </location>
</feature>
<feature type="lipid moiety-binding region" description="N-palmitoyl cysteine" evidence="1">
    <location>
        <position position="19"/>
    </location>
</feature>
<feature type="lipid moiety-binding region" description="S-diacylglycerol cysteine" evidence="1">
    <location>
        <position position="19"/>
    </location>
</feature>
<name>FLGH_LEGPH</name>
<comment type="function">
    <text evidence="1">Assembles around the rod to form the L-ring and probably protects the motor/basal body from shearing forces during rotation.</text>
</comment>
<comment type="subunit">
    <text evidence="1">The basal body constitutes a major portion of the flagellar organelle and consists of four rings (L,P,S, and M) mounted on a central rod.</text>
</comment>
<comment type="subcellular location">
    <subcellularLocation>
        <location evidence="1">Cell outer membrane</location>
        <topology evidence="1">Lipid-anchor</topology>
    </subcellularLocation>
    <subcellularLocation>
        <location evidence="1">Bacterial flagellum basal body</location>
    </subcellularLocation>
</comment>
<comment type="similarity">
    <text evidence="1">Belongs to the FlgH family.</text>
</comment>
<organism>
    <name type="scientific">Legionella pneumophila subsp. pneumophila (strain Philadelphia 1 / ATCC 33152 / DSM 7513)</name>
    <dbReference type="NCBI Taxonomy" id="272624"/>
    <lineage>
        <taxon>Bacteria</taxon>
        <taxon>Pseudomonadati</taxon>
        <taxon>Pseudomonadota</taxon>
        <taxon>Gammaproteobacteria</taxon>
        <taxon>Legionellales</taxon>
        <taxon>Legionellaceae</taxon>
        <taxon>Legionella</taxon>
    </lineage>
</organism>
<accession>Q5ZW65</accession>
<proteinExistence type="inferred from homology"/>
<dbReference type="EMBL" id="AE017354">
    <property type="protein sequence ID" value="AAU27306.1"/>
    <property type="molecule type" value="Genomic_DNA"/>
</dbReference>
<dbReference type="RefSeq" id="WP_010946954.1">
    <property type="nucleotide sequence ID" value="NC_002942.5"/>
</dbReference>
<dbReference type="RefSeq" id="YP_095253.1">
    <property type="nucleotide sequence ID" value="NC_002942.5"/>
</dbReference>
<dbReference type="SMR" id="Q5ZW65"/>
<dbReference type="STRING" id="272624.lpg1222"/>
<dbReference type="PaxDb" id="272624-lpg1222"/>
<dbReference type="GeneID" id="57035213"/>
<dbReference type="KEGG" id="lpn:lpg1222"/>
<dbReference type="PATRIC" id="fig|272624.6.peg.1286"/>
<dbReference type="eggNOG" id="COG2063">
    <property type="taxonomic scope" value="Bacteria"/>
</dbReference>
<dbReference type="HOGENOM" id="CLU_069313_0_2_6"/>
<dbReference type="OrthoDB" id="9789463at2"/>
<dbReference type="Proteomes" id="UP000000609">
    <property type="component" value="Chromosome"/>
</dbReference>
<dbReference type="GO" id="GO:0009427">
    <property type="term" value="C:bacterial-type flagellum basal body, distal rod, L ring"/>
    <property type="evidence" value="ECO:0007669"/>
    <property type="project" value="InterPro"/>
</dbReference>
<dbReference type="GO" id="GO:0009279">
    <property type="term" value="C:cell outer membrane"/>
    <property type="evidence" value="ECO:0007669"/>
    <property type="project" value="UniProtKB-SubCell"/>
</dbReference>
<dbReference type="GO" id="GO:0003774">
    <property type="term" value="F:cytoskeletal motor activity"/>
    <property type="evidence" value="ECO:0007669"/>
    <property type="project" value="InterPro"/>
</dbReference>
<dbReference type="GO" id="GO:0071973">
    <property type="term" value="P:bacterial-type flagellum-dependent cell motility"/>
    <property type="evidence" value="ECO:0007669"/>
    <property type="project" value="InterPro"/>
</dbReference>
<dbReference type="HAMAP" id="MF_00415">
    <property type="entry name" value="FlgH"/>
    <property type="match status" value="1"/>
</dbReference>
<dbReference type="InterPro" id="IPR000527">
    <property type="entry name" value="Flag_Lring"/>
</dbReference>
<dbReference type="NCBIfam" id="NF001304">
    <property type="entry name" value="PRK00249.1-4"/>
    <property type="match status" value="1"/>
</dbReference>
<dbReference type="NCBIfam" id="NF009341">
    <property type="entry name" value="PRK12701.1"/>
    <property type="match status" value="1"/>
</dbReference>
<dbReference type="PANTHER" id="PTHR34933">
    <property type="entry name" value="FLAGELLAR L-RING PROTEIN"/>
    <property type="match status" value="1"/>
</dbReference>
<dbReference type="PANTHER" id="PTHR34933:SF1">
    <property type="entry name" value="FLAGELLAR L-RING PROTEIN"/>
    <property type="match status" value="1"/>
</dbReference>
<dbReference type="Pfam" id="PF02107">
    <property type="entry name" value="FlgH"/>
    <property type="match status" value="1"/>
</dbReference>
<dbReference type="PRINTS" id="PR01008">
    <property type="entry name" value="FLGLRINGFLGH"/>
</dbReference>
<dbReference type="PROSITE" id="PS51257">
    <property type="entry name" value="PROKAR_LIPOPROTEIN"/>
    <property type="match status" value="1"/>
</dbReference>
<reference key="1">
    <citation type="journal article" date="2004" name="Science">
        <title>The genomic sequence of the accidental pathogen Legionella pneumophila.</title>
        <authorList>
            <person name="Chien M."/>
            <person name="Morozova I."/>
            <person name="Shi S."/>
            <person name="Sheng H."/>
            <person name="Chen J."/>
            <person name="Gomez S.M."/>
            <person name="Asamani G."/>
            <person name="Hill K."/>
            <person name="Nuara J."/>
            <person name="Feder M."/>
            <person name="Rineer J."/>
            <person name="Greenberg J.J."/>
            <person name="Steshenko V."/>
            <person name="Park S.H."/>
            <person name="Zhao B."/>
            <person name="Teplitskaya E."/>
            <person name="Edwards J.R."/>
            <person name="Pampou S."/>
            <person name="Georghiou A."/>
            <person name="Chou I.-C."/>
            <person name="Iannuccilli W."/>
            <person name="Ulz M.E."/>
            <person name="Kim D.H."/>
            <person name="Geringer-Sameth A."/>
            <person name="Goldsberry C."/>
            <person name="Morozov P."/>
            <person name="Fischer S.G."/>
            <person name="Segal G."/>
            <person name="Qu X."/>
            <person name="Rzhetsky A."/>
            <person name="Zhang P."/>
            <person name="Cayanis E."/>
            <person name="De Jong P.J."/>
            <person name="Ju J."/>
            <person name="Kalachikov S."/>
            <person name="Shuman H.A."/>
            <person name="Russo J.J."/>
        </authorList>
    </citation>
    <scope>NUCLEOTIDE SEQUENCE [LARGE SCALE GENOMIC DNA]</scope>
    <source>
        <strain>Philadelphia 1 / ATCC 33152 / DSM 7513</strain>
    </source>
</reference>
<sequence>MNRLNIAVSCLATALLFGCEALHPPAPGDNPDYAPTYPVTPDPKELRKVSGAIYSSETALPLFETPRARHPGDILTVYLIEKTDAQKNATTTQRKNDTTKITNKLFLGRPISLGSGYSMDFDLDNQRQFNGEGRSIQNNKLAGSISVTVAKVLANGNMVVQGEKWVRINQGNEFVRLSGIVRPQDIKADNTITSDRIANARISYGGTGQINNTNAQGWLSRILWGPLFPT</sequence>